<feature type="chain" id="PRO_0000239093" description="Magnesium transport protein CorA">
    <location>
        <begin position="1"/>
        <end position="316"/>
    </location>
</feature>
<feature type="transmembrane region" description="Helical" evidence="4">
    <location>
        <begin position="258"/>
        <end position="278"/>
    </location>
</feature>
<feature type="transmembrane region" description="Helical" evidence="4">
    <location>
        <begin position="290"/>
        <end position="310"/>
    </location>
</feature>
<feature type="short sequence motif" description="Probable selectivity filter" evidence="3">
    <location>
        <begin position="277"/>
        <end position="279"/>
    </location>
</feature>
<name>CORA_PECAS</name>
<sequence length="316" mass="36548">MLSAFKLDNCRLSRLELDDSDDLTASIWVDLIEPEDDEREKVQTELGQSLATRPELEDIEASARFFEDEDGLHIHSFFFFEDADDHAGNSTVAFTIRDGRLYTLRERELPAFRLYRMRARNQTLVDGNAYELLLDLFETKIEQLADEIENIYSDLESLSRIIMEGRQGDEYDDALSTLAEQEDVGWKVRLCLMDTQRALNFLVRKARLPSGQLEQAREILRDIESLLPHNESLFQKVNFLMQAAMGFINIEQSRIIKIFSVVSVVFLPPTLVASSYGMNFEFMPELRWSFGYPGAIVLMILAGLAPYLYFKRKNWL</sequence>
<proteinExistence type="inferred from homology"/>
<accession>Q6CZH4</accession>
<evidence type="ECO:0000250" key="1">
    <source>
        <dbReference type="UniProtKB" id="P0ABI4"/>
    </source>
</evidence>
<evidence type="ECO:0000250" key="2">
    <source>
        <dbReference type="UniProtKB" id="Q7VRM7"/>
    </source>
</evidence>
<evidence type="ECO:0000250" key="3">
    <source>
        <dbReference type="UniProtKB" id="Q9WZ31"/>
    </source>
</evidence>
<evidence type="ECO:0000255" key="4"/>
<evidence type="ECO:0000305" key="5"/>
<reference key="1">
    <citation type="journal article" date="2004" name="Proc. Natl. Acad. Sci. U.S.A.">
        <title>Genome sequence of the enterobacterial phytopathogen Erwinia carotovora subsp. atroseptica and characterization of virulence factors.</title>
        <authorList>
            <person name="Bell K.S."/>
            <person name="Sebaihia M."/>
            <person name="Pritchard L."/>
            <person name="Holden M.T.G."/>
            <person name="Hyman L.J."/>
            <person name="Holeva M.C."/>
            <person name="Thomson N.R."/>
            <person name="Bentley S.D."/>
            <person name="Churcher L.J.C."/>
            <person name="Mungall K."/>
            <person name="Atkin R."/>
            <person name="Bason N."/>
            <person name="Brooks K."/>
            <person name="Chillingworth T."/>
            <person name="Clark K."/>
            <person name="Doggett J."/>
            <person name="Fraser A."/>
            <person name="Hance Z."/>
            <person name="Hauser H."/>
            <person name="Jagels K."/>
            <person name="Moule S."/>
            <person name="Norbertczak H."/>
            <person name="Ormond D."/>
            <person name="Price C."/>
            <person name="Quail M.A."/>
            <person name="Sanders M."/>
            <person name="Walker D."/>
            <person name="Whitehead S."/>
            <person name="Salmond G.P.C."/>
            <person name="Birch P.R.J."/>
            <person name="Parkhill J."/>
            <person name="Toth I.K."/>
        </authorList>
    </citation>
    <scope>NUCLEOTIDE SEQUENCE [LARGE SCALE GENOMIC DNA]</scope>
    <source>
        <strain>SCRI 1043 / ATCC BAA-672</strain>
    </source>
</reference>
<organism>
    <name type="scientific">Pectobacterium atrosepticum (strain SCRI 1043 / ATCC BAA-672)</name>
    <name type="common">Erwinia carotovora subsp. atroseptica</name>
    <dbReference type="NCBI Taxonomy" id="218491"/>
    <lineage>
        <taxon>Bacteria</taxon>
        <taxon>Pseudomonadati</taxon>
        <taxon>Pseudomonadota</taxon>
        <taxon>Gammaproteobacteria</taxon>
        <taxon>Enterobacterales</taxon>
        <taxon>Pectobacteriaceae</taxon>
        <taxon>Pectobacterium</taxon>
    </lineage>
</organism>
<comment type="function">
    <text evidence="1 3">Mediates influx of magnesium ions (By similarity). Alternates between open and closed states. Activated by low cytoplasmic Mg(2+) levels. Inactive when cytoplasmic Mg(2+) levels are high (By similarity).</text>
</comment>
<comment type="catalytic activity">
    <reaction evidence="1">
        <text>Mg(2+)(in) = Mg(2+)(out)</text>
        <dbReference type="Rhea" id="RHEA:29827"/>
        <dbReference type="ChEBI" id="CHEBI:18420"/>
    </reaction>
</comment>
<comment type="subunit">
    <text evidence="3">Homopentamer. In the absence of Mg(2+), interactions between subunits are weakened, and dimers, trimers and tetramers can be observed in vitro (By similarity).</text>
</comment>
<comment type="subcellular location">
    <subcellularLocation>
        <location evidence="2">Cell inner membrane</location>
        <topology evidence="3">Multi-pass membrane protein</topology>
    </subcellularLocation>
</comment>
<comment type="domain">
    <text evidence="3">The central ion permeation pathway is formed by the first transmembrane domain from each of the five subunits. Mg(2+) binding strengthens interactions between subunits and leads to the formation of a symmetrical homopentamer surrounding a closed ion permeation pathway. Low Mg(2+) concentrations trigger both a conformation change within each subunit and a loosening of the interactions between subunits. This results in an open ion conduction pathway. In addition, this results in a less symmetrical shape of the whole complex.</text>
</comment>
<comment type="similarity">
    <text evidence="5">Belongs to the CorA metal ion transporter (MIT) (TC 1.A.35) family.</text>
</comment>
<protein>
    <recommendedName>
        <fullName>Magnesium transport protein CorA</fullName>
    </recommendedName>
</protein>
<gene>
    <name type="primary">corA</name>
    <name type="ordered locus">ECA4177</name>
</gene>
<keyword id="KW-0997">Cell inner membrane</keyword>
<keyword id="KW-1003">Cell membrane</keyword>
<keyword id="KW-0406">Ion transport</keyword>
<keyword id="KW-0460">Magnesium</keyword>
<keyword id="KW-0472">Membrane</keyword>
<keyword id="KW-1185">Reference proteome</keyword>
<keyword id="KW-0812">Transmembrane</keyword>
<keyword id="KW-1133">Transmembrane helix</keyword>
<keyword id="KW-0813">Transport</keyword>
<dbReference type="EMBL" id="BX950851">
    <property type="protein sequence ID" value="CAG77074.1"/>
    <property type="molecule type" value="Genomic_DNA"/>
</dbReference>
<dbReference type="RefSeq" id="WP_011095648.1">
    <property type="nucleotide sequence ID" value="NC_004547.2"/>
</dbReference>
<dbReference type="SMR" id="Q6CZH4"/>
<dbReference type="STRING" id="218491.ECA4177"/>
<dbReference type="GeneID" id="57210839"/>
<dbReference type="KEGG" id="eca:ECA4177"/>
<dbReference type="PATRIC" id="fig|218491.5.peg.4250"/>
<dbReference type="eggNOG" id="COG0598">
    <property type="taxonomic scope" value="Bacteria"/>
</dbReference>
<dbReference type="HOGENOM" id="CLU_007127_5_0_6"/>
<dbReference type="OrthoDB" id="9803416at2"/>
<dbReference type="Proteomes" id="UP000007966">
    <property type="component" value="Chromosome"/>
</dbReference>
<dbReference type="GO" id="GO:0005886">
    <property type="term" value="C:plasma membrane"/>
    <property type="evidence" value="ECO:0007669"/>
    <property type="project" value="UniProtKB-SubCell"/>
</dbReference>
<dbReference type="GO" id="GO:0015087">
    <property type="term" value="F:cobalt ion transmembrane transporter activity"/>
    <property type="evidence" value="ECO:0007669"/>
    <property type="project" value="InterPro"/>
</dbReference>
<dbReference type="GO" id="GO:0015095">
    <property type="term" value="F:magnesium ion transmembrane transporter activity"/>
    <property type="evidence" value="ECO:0007669"/>
    <property type="project" value="InterPro"/>
</dbReference>
<dbReference type="GO" id="GO:0015099">
    <property type="term" value="F:nickel cation transmembrane transporter activity"/>
    <property type="evidence" value="ECO:0007669"/>
    <property type="project" value="TreeGrafter"/>
</dbReference>
<dbReference type="CDD" id="cd12835">
    <property type="entry name" value="EcCorA-like_1"/>
    <property type="match status" value="1"/>
</dbReference>
<dbReference type="FunFam" id="1.20.58.340:FF:000001">
    <property type="entry name" value="Magnesium transport protein CorA"/>
    <property type="match status" value="1"/>
</dbReference>
<dbReference type="Gene3D" id="1.20.58.340">
    <property type="entry name" value="Magnesium transport protein CorA, transmembrane region"/>
    <property type="match status" value="1"/>
</dbReference>
<dbReference type="InterPro" id="IPR045861">
    <property type="entry name" value="CorA_cytoplasmic_dom"/>
</dbReference>
<dbReference type="InterPro" id="IPR050829">
    <property type="entry name" value="CorA_MIT"/>
</dbReference>
<dbReference type="InterPro" id="IPR045863">
    <property type="entry name" value="CorA_TM1_TM2"/>
</dbReference>
<dbReference type="InterPro" id="IPR004488">
    <property type="entry name" value="Mg/Co-transport_prot_CorA"/>
</dbReference>
<dbReference type="InterPro" id="IPR002523">
    <property type="entry name" value="MgTranspt_CorA/ZnTranspt_ZntB"/>
</dbReference>
<dbReference type="NCBIfam" id="TIGR00383">
    <property type="entry name" value="corA"/>
    <property type="match status" value="1"/>
</dbReference>
<dbReference type="PANTHER" id="PTHR47685">
    <property type="entry name" value="MAGNESIUM TRANSPORT PROTEIN CORA"/>
    <property type="match status" value="1"/>
</dbReference>
<dbReference type="PANTHER" id="PTHR47685:SF1">
    <property type="entry name" value="MAGNESIUM TRANSPORT PROTEIN CORA"/>
    <property type="match status" value="1"/>
</dbReference>
<dbReference type="Pfam" id="PF01544">
    <property type="entry name" value="CorA"/>
    <property type="match status" value="1"/>
</dbReference>
<dbReference type="SUPFAM" id="SSF143865">
    <property type="entry name" value="CorA soluble domain-like"/>
    <property type="match status" value="1"/>
</dbReference>
<dbReference type="SUPFAM" id="SSF144083">
    <property type="entry name" value="Magnesium transport protein CorA, transmembrane region"/>
    <property type="match status" value="1"/>
</dbReference>